<evidence type="ECO:0000255" key="1">
    <source>
        <dbReference type="HAMAP-Rule" id="MF_01382"/>
    </source>
</evidence>
<organism>
    <name type="scientific">Aliarcobacter butzleri (strain RM4018)</name>
    <name type="common">Arcobacter butzleri</name>
    <dbReference type="NCBI Taxonomy" id="367737"/>
    <lineage>
        <taxon>Bacteria</taxon>
        <taxon>Pseudomonadati</taxon>
        <taxon>Campylobacterota</taxon>
        <taxon>Epsilonproteobacteria</taxon>
        <taxon>Campylobacterales</taxon>
        <taxon>Arcobacteraceae</taxon>
        <taxon>Aliarcobacter</taxon>
    </lineage>
</organism>
<gene>
    <name evidence="1" type="primary">secA</name>
    <name type="ordered locus">Abu_1310</name>
</gene>
<name>SECA_ALIB4</name>
<reference key="1">
    <citation type="journal article" date="2007" name="PLoS ONE">
        <title>The complete genome sequence and analysis of the Epsilonproteobacterium Arcobacter butzleri.</title>
        <authorList>
            <person name="Miller W.G."/>
            <person name="Parker C.T."/>
            <person name="Rubenfield M."/>
            <person name="Mendz G.L."/>
            <person name="Woesten M.M.S.M."/>
            <person name="Ussery D.W."/>
            <person name="Stolz J.F."/>
            <person name="Binnewies T.T."/>
            <person name="Hallin P.F."/>
            <person name="Wang G."/>
            <person name="Malek J.A."/>
            <person name="Rogosin A."/>
            <person name="Stanker L.H."/>
            <person name="Mandrell R.E."/>
        </authorList>
    </citation>
    <scope>NUCLEOTIDE SEQUENCE [LARGE SCALE GENOMIC DNA]</scope>
    <source>
        <strain>RM4018</strain>
    </source>
</reference>
<proteinExistence type="inferred from homology"/>
<accession>A8EUE3</accession>
<dbReference type="EC" id="7.4.2.8" evidence="1"/>
<dbReference type="EMBL" id="CP000361">
    <property type="protein sequence ID" value="ABV67567.1"/>
    <property type="molecule type" value="Genomic_DNA"/>
</dbReference>
<dbReference type="RefSeq" id="WP_012012978.1">
    <property type="nucleotide sequence ID" value="NC_009850.1"/>
</dbReference>
<dbReference type="SMR" id="A8EUE3"/>
<dbReference type="STRING" id="367737.Abu_1310"/>
<dbReference type="GeneID" id="24303399"/>
<dbReference type="KEGG" id="abu:Abu_1310"/>
<dbReference type="eggNOG" id="COG0653">
    <property type="taxonomic scope" value="Bacteria"/>
</dbReference>
<dbReference type="HOGENOM" id="CLU_005314_3_0_7"/>
<dbReference type="Proteomes" id="UP000001136">
    <property type="component" value="Chromosome"/>
</dbReference>
<dbReference type="GO" id="GO:0031522">
    <property type="term" value="C:cell envelope Sec protein transport complex"/>
    <property type="evidence" value="ECO:0007669"/>
    <property type="project" value="TreeGrafter"/>
</dbReference>
<dbReference type="GO" id="GO:0005829">
    <property type="term" value="C:cytosol"/>
    <property type="evidence" value="ECO:0007669"/>
    <property type="project" value="TreeGrafter"/>
</dbReference>
<dbReference type="GO" id="GO:0005886">
    <property type="term" value="C:plasma membrane"/>
    <property type="evidence" value="ECO:0007669"/>
    <property type="project" value="UniProtKB-SubCell"/>
</dbReference>
<dbReference type="GO" id="GO:0005524">
    <property type="term" value="F:ATP binding"/>
    <property type="evidence" value="ECO:0007669"/>
    <property type="project" value="UniProtKB-UniRule"/>
</dbReference>
<dbReference type="GO" id="GO:0046872">
    <property type="term" value="F:metal ion binding"/>
    <property type="evidence" value="ECO:0007669"/>
    <property type="project" value="UniProtKB-KW"/>
</dbReference>
<dbReference type="GO" id="GO:0008564">
    <property type="term" value="F:protein-exporting ATPase activity"/>
    <property type="evidence" value="ECO:0007669"/>
    <property type="project" value="UniProtKB-EC"/>
</dbReference>
<dbReference type="GO" id="GO:0065002">
    <property type="term" value="P:intracellular protein transmembrane transport"/>
    <property type="evidence" value="ECO:0007669"/>
    <property type="project" value="UniProtKB-UniRule"/>
</dbReference>
<dbReference type="GO" id="GO:0017038">
    <property type="term" value="P:protein import"/>
    <property type="evidence" value="ECO:0007669"/>
    <property type="project" value="InterPro"/>
</dbReference>
<dbReference type="GO" id="GO:0006605">
    <property type="term" value="P:protein targeting"/>
    <property type="evidence" value="ECO:0007669"/>
    <property type="project" value="UniProtKB-UniRule"/>
</dbReference>
<dbReference type="GO" id="GO:0043952">
    <property type="term" value="P:protein transport by the Sec complex"/>
    <property type="evidence" value="ECO:0007669"/>
    <property type="project" value="TreeGrafter"/>
</dbReference>
<dbReference type="CDD" id="cd17928">
    <property type="entry name" value="DEXDc_SecA"/>
    <property type="match status" value="1"/>
</dbReference>
<dbReference type="CDD" id="cd18803">
    <property type="entry name" value="SF2_C_secA"/>
    <property type="match status" value="1"/>
</dbReference>
<dbReference type="FunFam" id="3.40.50.300:FF:000429">
    <property type="entry name" value="Preprotein translocase subunit SecA"/>
    <property type="match status" value="1"/>
</dbReference>
<dbReference type="FunFam" id="3.90.1440.10:FF:000001">
    <property type="entry name" value="Preprotein translocase subunit SecA"/>
    <property type="match status" value="1"/>
</dbReference>
<dbReference type="Gene3D" id="1.10.3060.10">
    <property type="entry name" value="Helical scaffold and wing domains of SecA"/>
    <property type="match status" value="1"/>
</dbReference>
<dbReference type="Gene3D" id="3.40.50.300">
    <property type="entry name" value="P-loop containing nucleotide triphosphate hydrolases"/>
    <property type="match status" value="3"/>
</dbReference>
<dbReference type="Gene3D" id="3.90.1440.10">
    <property type="entry name" value="SecA, preprotein cross-linking domain"/>
    <property type="match status" value="1"/>
</dbReference>
<dbReference type="HAMAP" id="MF_01382">
    <property type="entry name" value="SecA"/>
    <property type="match status" value="1"/>
</dbReference>
<dbReference type="InterPro" id="IPR014001">
    <property type="entry name" value="Helicase_ATP-bd"/>
</dbReference>
<dbReference type="InterPro" id="IPR001650">
    <property type="entry name" value="Helicase_C-like"/>
</dbReference>
<dbReference type="InterPro" id="IPR027417">
    <property type="entry name" value="P-loop_NTPase"/>
</dbReference>
<dbReference type="InterPro" id="IPR004027">
    <property type="entry name" value="SEC_C_motif"/>
</dbReference>
<dbReference type="InterPro" id="IPR000185">
    <property type="entry name" value="SecA"/>
</dbReference>
<dbReference type="InterPro" id="IPR020937">
    <property type="entry name" value="SecA_CS"/>
</dbReference>
<dbReference type="InterPro" id="IPR011115">
    <property type="entry name" value="SecA_DEAD"/>
</dbReference>
<dbReference type="InterPro" id="IPR014018">
    <property type="entry name" value="SecA_motor_DEAD"/>
</dbReference>
<dbReference type="InterPro" id="IPR011130">
    <property type="entry name" value="SecA_preprotein_X-link_dom"/>
</dbReference>
<dbReference type="InterPro" id="IPR044722">
    <property type="entry name" value="SecA_SF2_C"/>
</dbReference>
<dbReference type="InterPro" id="IPR011116">
    <property type="entry name" value="SecA_Wing/Scaffold"/>
</dbReference>
<dbReference type="InterPro" id="IPR036266">
    <property type="entry name" value="SecA_Wing/Scaffold_sf"/>
</dbReference>
<dbReference type="InterPro" id="IPR036670">
    <property type="entry name" value="SecA_X-link_sf"/>
</dbReference>
<dbReference type="NCBIfam" id="NF006630">
    <property type="entry name" value="PRK09200.1"/>
    <property type="match status" value="1"/>
</dbReference>
<dbReference type="NCBIfam" id="NF009538">
    <property type="entry name" value="PRK12904.1"/>
    <property type="match status" value="1"/>
</dbReference>
<dbReference type="NCBIfam" id="TIGR00963">
    <property type="entry name" value="secA"/>
    <property type="match status" value="1"/>
</dbReference>
<dbReference type="PANTHER" id="PTHR30612:SF0">
    <property type="entry name" value="CHLOROPLAST PROTEIN-TRANSPORTING ATPASE"/>
    <property type="match status" value="1"/>
</dbReference>
<dbReference type="PANTHER" id="PTHR30612">
    <property type="entry name" value="SECA INNER MEMBRANE COMPONENT OF SEC PROTEIN SECRETION SYSTEM"/>
    <property type="match status" value="1"/>
</dbReference>
<dbReference type="Pfam" id="PF21090">
    <property type="entry name" value="P-loop_SecA"/>
    <property type="match status" value="1"/>
</dbReference>
<dbReference type="Pfam" id="PF02810">
    <property type="entry name" value="SEC-C"/>
    <property type="match status" value="1"/>
</dbReference>
<dbReference type="Pfam" id="PF07517">
    <property type="entry name" value="SecA_DEAD"/>
    <property type="match status" value="1"/>
</dbReference>
<dbReference type="Pfam" id="PF01043">
    <property type="entry name" value="SecA_PP_bind"/>
    <property type="match status" value="1"/>
</dbReference>
<dbReference type="Pfam" id="PF07516">
    <property type="entry name" value="SecA_SW"/>
    <property type="match status" value="1"/>
</dbReference>
<dbReference type="PRINTS" id="PR00906">
    <property type="entry name" value="SECA"/>
</dbReference>
<dbReference type="SMART" id="SM00957">
    <property type="entry name" value="SecA_DEAD"/>
    <property type="match status" value="1"/>
</dbReference>
<dbReference type="SMART" id="SM00958">
    <property type="entry name" value="SecA_PP_bind"/>
    <property type="match status" value="1"/>
</dbReference>
<dbReference type="SUPFAM" id="SSF81886">
    <property type="entry name" value="Helical scaffold and wing domains of SecA"/>
    <property type="match status" value="1"/>
</dbReference>
<dbReference type="SUPFAM" id="SSF52540">
    <property type="entry name" value="P-loop containing nucleoside triphosphate hydrolases"/>
    <property type="match status" value="2"/>
</dbReference>
<dbReference type="SUPFAM" id="SSF81767">
    <property type="entry name" value="Pre-protein crosslinking domain of SecA"/>
    <property type="match status" value="1"/>
</dbReference>
<dbReference type="PROSITE" id="PS01312">
    <property type="entry name" value="SECA"/>
    <property type="match status" value="1"/>
</dbReference>
<dbReference type="PROSITE" id="PS51196">
    <property type="entry name" value="SECA_MOTOR_DEAD"/>
    <property type="match status" value="1"/>
</dbReference>
<keyword id="KW-0067">ATP-binding</keyword>
<keyword id="KW-0997">Cell inner membrane</keyword>
<keyword id="KW-1003">Cell membrane</keyword>
<keyword id="KW-0963">Cytoplasm</keyword>
<keyword id="KW-0472">Membrane</keyword>
<keyword id="KW-0479">Metal-binding</keyword>
<keyword id="KW-0547">Nucleotide-binding</keyword>
<keyword id="KW-0653">Protein transport</keyword>
<keyword id="KW-1185">Reference proteome</keyword>
<keyword id="KW-1278">Translocase</keyword>
<keyword id="KW-0811">Translocation</keyword>
<keyword id="KW-0813">Transport</keyword>
<keyword id="KW-0862">Zinc</keyword>
<comment type="function">
    <text evidence="1">Part of the Sec protein translocase complex. Interacts with the SecYEG preprotein conducting channel. Has a central role in coupling the hydrolysis of ATP to the transfer of proteins into and across the cell membrane, serving as an ATP-driven molecular motor driving the stepwise translocation of polypeptide chains across the membrane.</text>
</comment>
<comment type="catalytic activity">
    <reaction evidence="1">
        <text>ATP + H2O + cellular proteinSide 1 = ADP + phosphate + cellular proteinSide 2.</text>
        <dbReference type="EC" id="7.4.2.8"/>
    </reaction>
</comment>
<comment type="cofactor">
    <cofactor evidence="1">
        <name>Zn(2+)</name>
        <dbReference type="ChEBI" id="CHEBI:29105"/>
    </cofactor>
    <text evidence="1">May bind 1 zinc ion per subunit.</text>
</comment>
<comment type="subunit">
    <text evidence="1">Monomer and homodimer. Part of the essential Sec protein translocation apparatus which comprises SecA, SecYEG and auxiliary proteins SecDF-YajC and YidC.</text>
</comment>
<comment type="subcellular location">
    <subcellularLocation>
        <location evidence="1">Cell inner membrane</location>
        <topology evidence="1">Peripheral membrane protein</topology>
        <orientation evidence="1">Cytoplasmic side</orientation>
    </subcellularLocation>
    <subcellularLocation>
        <location evidence="1">Cytoplasm</location>
    </subcellularLocation>
    <text evidence="1">Distribution is 50-50.</text>
</comment>
<comment type="similarity">
    <text evidence="1">Belongs to the SecA family.</text>
</comment>
<protein>
    <recommendedName>
        <fullName evidence="1">Protein translocase subunit SecA</fullName>
        <ecNumber evidence="1">7.4.2.8</ecNumber>
    </recommendedName>
</protein>
<feature type="chain" id="PRO_0000320726" description="Protein translocase subunit SecA">
    <location>
        <begin position="1"/>
        <end position="872"/>
    </location>
</feature>
<feature type="binding site" evidence="1">
    <location>
        <position position="87"/>
    </location>
    <ligand>
        <name>ATP</name>
        <dbReference type="ChEBI" id="CHEBI:30616"/>
    </ligand>
</feature>
<feature type="binding site" evidence="1">
    <location>
        <begin position="105"/>
        <end position="109"/>
    </location>
    <ligand>
        <name>ATP</name>
        <dbReference type="ChEBI" id="CHEBI:30616"/>
    </ligand>
</feature>
<feature type="binding site" evidence="1">
    <location>
        <position position="510"/>
    </location>
    <ligand>
        <name>ATP</name>
        <dbReference type="ChEBI" id="CHEBI:30616"/>
    </ligand>
</feature>
<feature type="binding site" evidence="1">
    <location>
        <position position="847"/>
    </location>
    <ligand>
        <name>Zn(2+)</name>
        <dbReference type="ChEBI" id="CHEBI:29105"/>
    </ligand>
</feature>
<feature type="binding site" evidence="1">
    <location>
        <position position="849"/>
    </location>
    <ligand>
        <name>Zn(2+)</name>
        <dbReference type="ChEBI" id="CHEBI:29105"/>
    </ligand>
</feature>
<feature type="binding site" evidence="1">
    <location>
        <position position="858"/>
    </location>
    <ligand>
        <name>Zn(2+)</name>
        <dbReference type="ChEBI" id="CHEBI:29105"/>
    </ligand>
</feature>
<feature type="binding site" evidence="1">
    <location>
        <position position="859"/>
    </location>
    <ligand>
        <name>Zn(2+)</name>
        <dbReference type="ChEBI" id="CHEBI:29105"/>
    </ligand>
</feature>
<sequence length="872" mass="99087">MLNVFSKIFGTRNDKEVKKYRKKADAITALESKYTDLSDDELKNEFQKLKELVQKGEKTLDNVLFQSFAITREASRRVLNMRPYDVQLIGGMVLHEGRIAEMKTGEGKTLVGSLAVSLNALEGKGVHVVTVNDYLASRDANELRPLYEFLGFSVGAVVGGLKDDEQRREQYACDITYGTNNEFGFDYLRDNMCFDIKDKVQRGHNYVIVDEVDSILIDEARTPLIISGPTNHKNSNYLKANEIALKLEKGELIEPKSAAEKPITTGDFIVDEKNRAVTLTEQGHEAVEKLFGVDNLYSIENAMLSHSLDQALKANYIFKKDVDYVVKDNQIIIVDEFTGRLSEGRRFSEGLHQALEAKEGVTIQDESQTLADITFQNYFRMYKKLAGMTGTAQTEATEFAQIYNLDVVSIPTNIPVKRIDKNDLIYKSEKEKFEAVCNKIKELHEKGQPVLVGTASIEKSEKLHKILVDKKIPHTVLNAKQHEKEGKIIADAGQKGAVTIATNMAGRGVDIKLTKEILDLGGLAIIGTERHESRRIDNQLRGRSGRQGDVGESQFYLSLEDNLLRIFGSDRIKGIMERLGIEEGEHIESRMVTRAVENAQKKVESMHFESRKHLLEYDDVANQQRKVIYSFRNDLLKPDYDITSKIDENRIEYVQNLLTEANITSGMAEDDFNYEFIVNRFLEDLHFKINVEDIKKESYEELEEHLISILKDVYDKKMSVTSLEQKSEIERILYLQILDSAWREHLYAMDTLKTGIGLRGYNQKDPLVEYKKESYNMFIELIGNIKNEIIKILFTIQLQSQEDKQKEQEALAKMKEQMEKSTEHITTNIAQEAVKNSDKKIARNEPCPCGSGLKYKQCCGKSGPKIGLAAGK</sequence>